<feature type="initiator methionine" description="Removed" evidence="5">
    <location>
        <position position="1"/>
    </location>
</feature>
<feature type="chain" id="PRO_0000271262" description="Superoxide dismutase [Mn/Fe]">
    <location>
        <begin position="2"/>
        <end position="16" status="greater than"/>
    </location>
</feature>
<feature type="non-terminal residue">
    <location>
        <position position="16"/>
    </location>
</feature>
<protein>
    <recommendedName>
        <fullName>Superoxide dismutase [Mn/Fe]</fullName>
        <ecNumber>1.15.1.1</ecNumber>
    </recommendedName>
</protein>
<sequence length="16" mass="1746">MAKFELPNLPTADDAL</sequence>
<dbReference type="EC" id="1.15.1.1"/>
<dbReference type="GO" id="GO:0046872">
    <property type="term" value="F:metal ion binding"/>
    <property type="evidence" value="ECO:0007669"/>
    <property type="project" value="UniProtKB-KW"/>
</dbReference>
<dbReference type="GO" id="GO:0004784">
    <property type="term" value="F:superoxide dismutase activity"/>
    <property type="evidence" value="ECO:0007669"/>
    <property type="project" value="UniProtKB-EC"/>
</dbReference>
<evidence type="ECO:0000250" key="1"/>
<evidence type="ECO:0000250" key="2">
    <source>
        <dbReference type="UniProtKB" id="P0AGD3"/>
    </source>
</evidence>
<evidence type="ECO:0000250" key="3">
    <source>
        <dbReference type="UniProtKB" id="Q9K4V3"/>
    </source>
</evidence>
<evidence type="ECO:0000255" key="4"/>
<evidence type="ECO:0000269" key="5">
    <source>
    </source>
</evidence>
<evidence type="ECO:0000305" key="6"/>
<name>SODM_BACCE</name>
<reference evidence="6" key="1">
    <citation type="journal article" date="2002" name="J. Appl. Microbiol.">
        <title>Acid stress in the food pathogen Bacillus cereus.</title>
        <authorList>
            <person name="Browne N."/>
            <person name="Dowds B.C.A."/>
        </authorList>
    </citation>
    <scope>PROTEIN SEQUENCE OF 2-16</scope>
    <scope>INDUCTION</scope>
    <source>
        <strain evidence="5">DSM 626 / NCIMB 11796 / T</strain>
    </source>
</reference>
<accession>P83076</accession>
<keyword id="KW-0903">Direct protein sequencing</keyword>
<keyword id="KW-0408">Iron</keyword>
<keyword id="KW-0464">Manganese</keyword>
<keyword id="KW-0479">Metal-binding</keyword>
<keyword id="KW-0560">Oxidoreductase</keyword>
<organism>
    <name type="scientific">Bacillus cereus</name>
    <dbReference type="NCBI Taxonomy" id="1396"/>
    <lineage>
        <taxon>Bacteria</taxon>
        <taxon>Bacillati</taxon>
        <taxon>Bacillota</taxon>
        <taxon>Bacilli</taxon>
        <taxon>Bacillales</taxon>
        <taxon>Bacillaceae</taxon>
        <taxon>Bacillus</taxon>
        <taxon>Bacillus cereus group</taxon>
    </lineage>
</organism>
<proteinExistence type="evidence at protein level"/>
<comment type="function">
    <text evidence="1">Destroys superoxide anion radicals which are normally produced within the cells and which are toxic to biological systems.</text>
</comment>
<comment type="catalytic activity">
    <reaction evidence="2">
        <text>2 superoxide + 2 H(+) = H2O2 + O2</text>
        <dbReference type="Rhea" id="RHEA:20696"/>
        <dbReference type="ChEBI" id="CHEBI:15378"/>
        <dbReference type="ChEBI" id="CHEBI:15379"/>
        <dbReference type="ChEBI" id="CHEBI:16240"/>
        <dbReference type="ChEBI" id="CHEBI:18421"/>
        <dbReference type="EC" id="1.15.1.1"/>
    </reaction>
</comment>
<comment type="cofactor">
    <cofactor evidence="3">
        <name>Mn(2+)</name>
        <dbReference type="ChEBI" id="CHEBI:29035"/>
    </cofactor>
    <cofactor evidence="3">
        <name>Fe(2+)</name>
        <dbReference type="ChEBI" id="CHEBI:29033"/>
    </cofactor>
    <text evidence="3">Binds 1 Mn(2+) or Fe(2+) ion per subunit.</text>
</comment>
<comment type="subunit">
    <text evidence="2">Homodimer.</text>
</comment>
<comment type="induction">
    <text evidence="5">Repressed by acid stress.</text>
</comment>
<comment type="similarity">
    <text evidence="4">Belongs to the iron/manganese superoxide dismutase family.</text>
</comment>